<gene>
    <name type="primary">atpF2</name>
    <name type="synonym">atpG</name>
    <name type="ordered locus">Rpal_0912</name>
</gene>
<evidence type="ECO:0000250" key="1"/>
<evidence type="ECO:0000255" key="2"/>
<evidence type="ECO:0000256" key="3">
    <source>
        <dbReference type="SAM" id="MobiDB-lite"/>
    </source>
</evidence>
<evidence type="ECO:0000305" key="4"/>
<proteinExistence type="inferred from homology"/>
<keyword id="KW-0066">ATP synthesis</keyword>
<keyword id="KW-0997">Cell inner membrane</keyword>
<keyword id="KW-1003">Cell membrane</keyword>
<keyword id="KW-0138">CF(0)</keyword>
<keyword id="KW-0375">Hydrogen ion transport</keyword>
<keyword id="KW-0406">Ion transport</keyword>
<keyword id="KW-0472">Membrane</keyword>
<keyword id="KW-0812">Transmembrane</keyword>
<keyword id="KW-1133">Transmembrane helix</keyword>
<keyword id="KW-0813">Transport</keyword>
<protein>
    <recommendedName>
        <fullName>ATP synthase subunit b 2</fullName>
    </recommendedName>
    <alternativeName>
        <fullName>ATP synthase F(0) sector subunit b 2</fullName>
    </alternativeName>
    <alternativeName>
        <fullName>ATPase subunit I 2</fullName>
    </alternativeName>
    <alternativeName>
        <fullName>F-type ATPase subunit b 2</fullName>
        <shortName>F-ATPase subunit b 2</shortName>
    </alternativeName>
</protein>
<comment type="function">
    <text evidence="1">F(1)F(0) ATP synthase produces ATP from ADP in the presence of a proton or sodium gradient. F-type ATPases consist of two structural domains, F(1) containing the extramembraneous catalytic core and F(0) containing the membrane proton channel, linked together by a central stalk and a peripheral stalk. During catalysis, ATP synthesis in the catalytic domain of F(1) is coupled via a rotary mechanism of the central stalk subunits to proton translocation (By similarity).</text>
</comment>
<comment type="function">
    <text evidence="1">Component of the F(0) channel, it forms part of the peripheral stalk, linking F(1) to F(0). The b'-subunit is a diverged and duplicated form of b found in plants and photosynthetic bacteria (By similarity).</text>
</comment>
<comment type="subunit">
    <text evidence="1">F-type ATPases have 2 components, F(1) - the catalytic core - and F(0) - the membrane proton channel. F(1) has five subunits: alpha(3), beta(3), gamma(1), delta(1), epsilon(1). F(0) has three main subunits: a(1), b(2) and c(10-14). The alpha and beta chains form an alternating ring which encloses part of the gamma chain. F(1) is attached to F(0) by a central stalk formed by the gamma and epsilon chains, while a peripheral stalk is formed by the delta and b chains (By similarity).</text>
</comment>
<comment type="subcellular location">
    <subcellularLocation>
        <location evidence="1">Cell inner membrane</location>
        <topology evidence="1">Single-pass membrane protein</topology>
    </subcellularLocation>
</comment>
<comment type="similarity">
    <text evidence="4">Belongs to the ATPase B chain family.</text>
</comment>
<reference key="1">
    <citation type="submission" date="2008-05" db="EMBL/GenBank/DDBJ databases">
        <title>Complete sequence of Rhodopseudomonas palustris TIE-1.</title>
        <authorList>
            <consortium name="US DOE Joint Genome Institute"/>
            <person name="Lucas S."/>
            <person name="Copeland A."/>
            <person name="Lapidus A."/>
            <person name="Glavina del Rio T."/>
            <person name="Dalin E."/>
            <person name="Tice H."/>
            <person name="Pitluck S."/>
            <person name="Chain P."/>
            <person name="Malfatti S."/>
            <person name="Shin M."/>
            <person name="Vergez L."/>
            <person name="Lang D."/>
            <person name="Schmutz J."/>
            <person name="Larimer F."/>
            <person name="Land M."/>
            <person name="Hauser L."/>
            <person name="Kyrpides N."/>
            <person name="Mikhailova N."/>
            <person name="Emerson D."/>
            <person name="Newman D.K."/>
            <person name="Roden E."/>
            <person name="Richardson P."/>
        </authorList>
    </citation>
    <scope>NUCLEOTIDE SEQUENCE [LARGE SCALE GENOMIC DNA]</scope>
    <source>
        <strain>TIE-1</strain>
    </source>
</reference>
<organism>
    <name type="scientific">Rhodopseudomonas palustris (strain TIE-1)</name>
    <dbReference type="NCBI Taxonomy" id="395960"/>
    <lineage>
        <taxon>Bacteria</taxon>
        <taxon>Pseudomonadati</taxon>
        <taxon>Pseudomonadota</taxon>
        <taxon>Alphaproteobacteria</taxon>
        <taxon>Hyphomicrobiales</taxon>
        <taxon>Nitrobacteraceae</taxon>
        <taxon>Rhodopseudomonas</taxon>
    </lineage>
</organism>
<dbReference type="EMBL" id="CP001096">
    <property type="protein sequence ID" value="ACE99469.1"/>
    <property type="molecule type" value="Genomic_DNA"/>
</dbReference>
<dbReference type="RefSeq" id="WP_011156596.1">
    <property type="nucleotide sequence ID" value="NC_011004.1"/>
</dbReference>
<dbReference type="SMR" id="B3QF35"/>
<dbReference type="KEGG" id="rpt:Rpal_0912"/>
<dbReference type="HOGENOM" id="CLU_079215_1_2_5"/>
<dbReference type="OrthoDB" id="9805716at2"/>
<dbReference type="Proteomes" id="UP000001725">
    <property type="component" value="Chromosome"/>
</dbReference>
<dbReference type="GO" id="GO:0005886">
    <property type="term" value="C:plasma membrane"/>
    <property type="evidence" value="ECO:0007669"/>
    <property type="project" value="UniProtKB-SubCell"/>
</dbReference>
<dbReference type="GO" id="GO:0045259">
    <property type="term" value="C:proton-transporting ATP synthase complex"/>
    <property type="evidence" value="ECO:0007669"/>
    <property type="project" value="UniProtKB-KW"/>
</dbReference>
<dbReference type="GO" id="GO:0046933">
    <property type="term" value="F:proton-transporting ATP synthase activity, rotational mechanism"/>
    <property type="evidence" value="ECO:0007669"/>
    <property type="project" value="UniProtKB-UniRule"/>
</dbReference>
<dbReference type="GO" id="GO:0046961">
    <property type="term" value="F:proton-transporting ATPase activity, rotational mechanism"/>
    <property type="evidence" value="ECO:0007669"/>
    <property type="project" value="TreeGrafter"/>
</dbReference>
<dbReference type="CDD" id="cd06503">
    <property type="entry name" value="ATP-synt_Fo_b"/>
    <property type="match status" value="1"/>
</dbReference>
<dbReference type="HAMAP" id="MF_01398">
    <property type="entry name" value="ATP_synth_b_bprime"/>
    <property type="match status" value="1"/>
</dbReference>
<dbReference type="InterPro" id="IPR002146">
    <property type="entry name" value="ATP_synth_b/b'su_bac/chlpt"/>
</dbReference>
<dbReference type="InterPro" id="IPR050059">
    <property type="entry name" value="ATP_synthase_B_chain"/>
</dbReference>
<dbReference type="NCBIfam" id="NF006612">
    <property type="entry name" value="PRK09174.1"/>
    <property type="match status" value="1"/>
</dbReference>
<dbReference type="PANTHER" id="PTHR33445:SF1">
    <property type="entry name" value="ATP SYNTHASE SUBUNIT B"/>
    <property type="match status" value="1"/>
</dbReference>
<dbReference type="PANTHER" id="PTHR33445">
    <property type="entry name" value="ATP SYNTHASE SUBUNIT B', CHLOROPLASTIC"/>
    <property type="match status" value="1"/>
</dbReference>
<dbReference type="Pfam" id="PF00430">
    <property type="entry name" value="ATP-synt_B"/>
    <property type="match status" value="1"/>
</dbReference>
<name>ATPF2_RHOPT</name>
<accession>B3QF35</accession>
<feature type="chain" id="PRO_0000369044" description="ATP synthase subunit b 2">
    <location>
        <begin position="1"/>
        <end position="185"/>
    </location>
</feature>
<feature type="transmembrane region" description="Helical" evidence="2">
    <location>
        <begin position="37"/>
        <end position="57"/>
    </location>
</feature>
<feature type="region of interest" description="Disordered" evidence="3">
    <location>
        <begin position="1"/>
        <end position="26"/>
    </location>
</feature>
<sequence length="185" mass="19191">MAQGHGDAKGTTAHTEAGGGHKAPFPPFQQETFASQLVSLAIAFVALYLIVSKIALPRVGGVIEERQKTIDGDLAAAQKLKGEADDALKAYEAELADARARAQAIGAETREKLNAQAEAERKTLEQRLAAKLADAEKTIATTRTAAMGNVRNIASDAASAIVQQLAGVTPDSKAVDSAVDASLKG</sequence>